<sequence>MHIDVIGHGPALVLLHGWALHGGVFAPLVERLAPHYQLHLVDLPGHGFSRDDSTPLALPYVVAEIAAATPPAVWLGWSLGGLFALHAAATLPQVRGLAMIAATPRFVRGSDWPSAVQREVFVQFGVELSRDYRGTLERFLALDTLGSAHARSELRSLRETLTARGEPAPEALQQGLTLLERTDLRRTVPQLARPSLWIAGQRDRLVPAAGMHAAAALSPHAQALTIAGGGHAPFLGHADQVSEALQRFVASVP</sequence>
<feature type="chain" id="PRO_0000204501" description="Pimeloyl-[acyl-carrier protein] methyl ester esterase">
    <location>
        <begin position="1"/>
        <end position="253"/>
    </location>
</feature>
<feature type="active site" description="Nucleophile" evidence="1">
    <location>
        <position position="78"/>
    </location>
</feature>
<feature type="active site" evidence="1">
    <location>
        <position position="203"/>
    </location>
</feature>
<feature type="active site" evidence="1">
    <location>
        <position position="231"/>
    </location>
</feature>
<feature type="binding site" evidence="1">
    <location>
        <position position="18"/>
    </location>
    <ligand>
        <name>substrate</name>
    </ligand>
</feature>
<feature type="binding site" evidence="1">
    <location>
        <begin position="78"/>
        <end position="79"/>
    </location>
    <ligand>
        <name>substrate</name>
    </ligand>
</feature>
<feature type="binding site" evidence="1">
    <location>
        <begin position="139"/>
        <end position="143"/>
    </location>
    <ligand>
        <name>substrate</name>
    </ligand>
</feature>
<feature type="binding site" evidence="1">
    <location>
        <position position="231"/>
    </location>
    <ligand>
        <name>substrate</name>
    </ligand>
</feature>
<name>BIOH_XANAC</name>
<evidence type="ECO:0000255" key="1">
    <source>
        <dbReference type="HAMAP-Rule" id="MF_01260"/>
    </source>
</evidence>
<gene>
    <name evidence="1" type="primary">bioH</name>
    <name type="ordered locus">XAC0385</name>
</gene>
<reference key="1">
    <citation type="journal article" date="2002" name="Nature">
        <title>Comparison of the genomes of two Xanthomonas pathogens with differing host specificities.</title>
        <authorList>
            <person name="da Silva A.C.R."/>
            <person name="Ferro J.A."/>
            <person name="Reinach F.C."/>
            <person name="Farah C.S."/>
            <person name="Furlan L.R."/>
            <person name="Quaggio R.B."/>
            <person name="Monteiro-Vitorello C.B."/>
            <person name="Van Sluys M.A."/>
            <person name="Almeida N.F. Jr."/>
            <person name="Alves L.M.C."/>
            <person name="do Amaral A.M."/>
            <person name="Bertolini M.C."/>
            <person name="Camargo L.E.A."/>
            <person name="Camarotte G."/>
            <person name="Cannavan F."/>
            <person name="Cardozo J."/>
            <person name="Chambergo F."/>
            <person name="Ciapina L.P."/>
            <person name="Cicarelli R.M.B."/>
            <person name="Coutinho L.L."/>
            <person name="Cursino-Santos J.R."/>
            <person name="El-Dorry H."/>
            <person name="Faria J.B."/>
            <person name="Ferreira A.J.S."/>
            <person name="Ferreira R.C.C."/>
            <person name="Ferro M.I.T."/>
            <person name="Formighieri E.F."/>
            <person name="Franco M.C."/>
            <person name="Greggio C.C."/>
            <person name="Gruber A."/>
            <person name="Katsuyama A.M."/>
            <person name="Kishi L.T."/>
            <person name="Leite R.P."/>
            <person name="Lemos E.G.M."/>
            <person name="Lemos M.V.F."/>
            <person name="Locali E.C."/>
            <person name="Machado M.A."/>
            <person name="Madeira A.M.B.N."/>
            <person name="Martinez-Rossi N.M."/>
            <person name="Martins E.C."/>
            <person name="Meidanis J."/>
            <person name="Menck C.F.M."/>
            <person name="Miyaki C.Y."/>
            <person name="Moon D.H."/>
            <person name="Moreira L.M."/>
            <person name="Novo M.T.M."/>
            <person name="Okura V.K."/>
            <person name="Oliveira M.C."/>
            <person name="Oliveira V.R."/>
            <person name="Pereira H.A."/>
            <person name="Rossi A."/>
            <person name="Sena J.A.D."/>
            <person name="Silva C."/>
            <person name="de Souza R.F."/>
            <person name="Spinola L.A.F."/>
            <person name="Takita M.A."/>
            <person name="Tamura R.E."/>
            <person name="Teixeira E.C."/>
            <person name="Tezza R.I.D."/>
            <person name="Trindade dos Santos M."/>
            <person name="Truffi D."/>
            <person name="Tsai S.M."/>
            <person name="White F.F."/>
            <person name="Setubal J.C."/>
            <person name="Kitajima J.P."/>
        </authorList>
    </citation>
    <scope>NUCLEOTIDE SEQUENCE [LARGE SCALE GENOMIC DNA]</scope>
    <source>
        <strain>306</strain>
    </source>
</reference>
<comment type="function">
    <text evidence="1">The physiological role of BioH is to remove the methyl group introduced by BioC when the pimeloyl moiety is complete. It allows to synthesize pimeloyl-ACP via the fatty acid synthetic pathway through the hydrolysis of the ester bonds of pimeloyl-ACP esters.</text>
</comment>
<comment type="catalytic activity">
    <reaction evidence="1">
        <text>6-carboxyhexanoyl-[ACP] methyl ester + H2O = 6-carboxyhexanoyl-[ACP] + methanol + H(+)</text>
        <dbReference type="Rhea" id="RHEA:42700"/>
        <dbReference type="Rhea" id="RHEA-COMP:9955"/>
        <dbReference type="Rhea" id="RHEA-COMP:10186"/>
        <dbReference type="ChEBI" id="CHEBI:15377"/>
        <dbReference type="ChEBI" id="CHEBI:15378"/>
        <dbReference type="ChEBI" id="CHEBI:17790"/>
        <dbReference type="ChEBI" id="CHEBI:78846"/>
        <dbReference type="ChEBI" id="CHEBI:82735"/>
        <dbReference type="EC" id="3.1.1.85"/>
    </reaction>
</comment>
<comment type="pathway">
    <text evidence="1">Cofactor biosynthesis; biotin biosynthesis.</text>
</comment>
<comment type="subunit">
    <text evidence="1">Monomer.</text>
</comment>
<comment type="subcellular location">
    <subcellularLocation>
        <location evidence="1">Cytoplasm</location>
    </subcellularLocation>
</comment>
<comment type="similarity">
    <text evidence="1">Belongs to the AB hydrolase superfamily. Carboxylesterase BioH family.</text>
</comment>
<keyword id="KW-0093">Biotin biosynthesis</keyword>
<keyword id="KW-0963">Cytoplasm</keyword>
<keyword id="KW-0378">Hydrolase</keyword>
<keyword id="KW-0719">Serine esterase</keyword>
<protein>
    <recommendedName>
        <fullName evidence="1">Pimeloyl-[acyl-carrier protein] methyl ester esterase</fullName>
        <ecNumber evidence="1">3.1.1.85</ecNumber>
    </recommendedName>
    <alternativeName>
        <fullName evidence="1">Biotin synthesis protein BioH</fullName>
    </alternativeName>
    <alternativeName>
        <fullName evidence="1">Carboxylesterase BioH</fullName>
    </alternativeName>
</protein>
<proteinExistence type="inferred from homology"/>
<dbReference type="EC" id="3.1.1.85" evidence="1"/>
<dbReference type="EMBL" id="AE008923">
    <property type="protein sequence ID" value="AAM35277.1"/>
    <property type="molecule type" value="Genomic_DNA"/>
</dbReference>
<dbReference type="RefSeq" id="WP_005920037.1">
    <property type="nucleotide sequence ID" value="NC_003919.1"/>
</dbReference>
<dbReference type="SMR" id="Q8PQE0"/>
<dbReference type="ESTHER" id="xanax-BIOH">
    <property type="family name" value="BioH"/>
</dbReference>
<dbReference type="GeneID" id="66909599"/>
<dbReference type="KEGG" id="xac:XAC0385"/>
<dbReference type="eggNOG" id="COG2267">
    <property type="taxonomic scope" value="Bacteria"/>
</dbReference>
<dbReference type="HOGENOM" id="CLU_020336_12_2_6"/>
<dbReference type="UniPathway" id="UPA00078"/>
<dbReference type="Proteomes" id="UP000000576">
    <property type="component" value="Chromosome"/>
</dbReference>
<dbReference type="GO" id="GO:0005737">
    <property type="term" value="C:cytoplasm"/>
    <property type="evidence" value="ECO:0007669"/>
    <property type="project" value="UniProtKB-SubCell"/>
</dbReference>
<dbReference type="GO" id="GO:0016020">
    <property type="term" value="C:membrane"/>
    <property type="evidence" value="ECO:0007669"/>
    <property type="project" value="TreeGrafter"/>
</dbReference>
<dbReference type="GO" id="GO:0090499">
    <property type="term" value="F:pimelyl-[acyl-carrier protein] methyl ester esterase activity"/>
    <property type="evidence" value="ECO:0007669"/>
    <property type="project" value="UniProtKB-EC"/>
</dbReference>
<dbReference type="GO" id="GO:0009102">
    <property type="term" value="P:biotin biosynthetic process"/>
    <property type="evidence" value="ECO:0007669"/>
    <property type="project" value="UniProtKB-UniRule"/>
</dbReference>
<dbReference type="Gene3D" id="3.40.50.1820">
    <property type="entry name" value="alpha/beta hydrolase"/>
    <property type="match status" value="1"/>
</dbReference>
<dbReference type="HAMAP" id="MF_01260">
    <property type="entry name" value="Carboxylester"/>
    <property type="match status" value="1"/>
</dbReference>
<dbReference type="InterPro" id="IPR000073">
    <property type="entry name" value="AB_hydrolase_1"/>
</dbReference>
<dbReference type="InterPro" id="IPR029058">
    <property type="entry name" value="AB_hydrolase_fold"/>
</dbReference>
<dbReference type="InterPro" id="IPR050266">
    <property type="entry name" value="AB_hydrolase_sf"/>
</dbReference>
<dbReference type="InterPro" id="IPR010076">
    <property type="entry name" value="BioH"/>
</dbReference>
<dbReference type="NCBIfam" id="TIGR01738">
    <property type="entry name" value="bioH"/>
    <property type="match status" value="1"/>
</dbReference>
<dbReference type="PANTHER" id="PTHR43798:SF31">
    <property type="entry name" value="AB HYDROLASE SUPERFAMILY PROTEIN YCLE"/>
    <property type="match status" value="1"/>
</dbReference>
<dbReference type="PANTHER" id="PTHR43798">
    <property type="entry name" value="MONOACYLGLYCEROL LIPASE"/>
    <property type="match status" value="1"/>
</dbReference>
<dbReference type="Pfam" id="PF00561">
    <property type="entry name" value="Abhydrolase_1"/>
    <property type="match status" value="1"/>
</dbReference>
<dbReference type="SUPFAM" id="SSF53474">
    <property type="entry name" value="alpha/beta-Hydrolases"/>
    <property type="match status" value="1"/>
</dbReference>
<organism>
    <name type="scientific">Xanthomonas axonopodis pv. citri (strain 306)</name>
    <dbReference type="NCBI Taxonomy" id="190486"/>
    <lineage>
        <taxon>Bacteria</taxon>
        <taxon>Pseudomonadati</taxon>
        <taxon>Pseudomonadota</taxon>
        <taxon>Gammaproteobacteria</taxon>
        <taxon>Lysobacterales</taxon>
        <taxon>Lysobacteraceae</taxon>
        <taxon>Xanthomonas</taxon>
    </lineage>
</organism>
<accession>Q8PQE0</accession>